<feature type="chain" id="PRO_1000213813" description="Cell division protein SepF">
    <location>
        <begin position="1"/>
        <end position="210"/>
    </location>
</feature>
<feature type="region of interest" description="Disordered" evidence="2">
    <location>
        <begin position="13"/>
        <end position="101"/>
    </location>
</feature>
<feature type="compositionally biased region" description="Basic and acidic residues" evidence="2">
    <location>
        <begin position="22"/>
        <end position="70"/>
    </location>
</feature>
<feature type="compositionally biased region" description="Basic and acidic residues" evidence="2">
    <location>
        <begin position="83"/>
        <end position="93"/>
    </location>
</feature>
<reference key="1">
    <citation type="journal article" date="2010" name="J. Bacteriol.">
        <title>Genome sequence of the Fleming strain of Micrococcus luteus, a simple free-living actinobacterium.</title>
        <authorList>
            <person name="Young M."/>
            <person name="Artsatbanov V."/>
            <person name="Beller H.R."/>
            <person name="Chandra G."/>
            <person name="Chater K.F."/>
            <person name="Dover L.G."/>
            <person name="Goh E.B."/>
            <person name="Kahan T."/>
            <person name="Kaprelyants A.S."/>
            <person name="Kyrpides N."/>
            <person name="Lapidus A."/>
            <person name="Lowry S.R."/>
            <person name="Lykidis A."/>
            <person name="Mahillon J."/>
            <person name="Markowitz V."/>
            <person name="Mavromatis K."/>
            <person name="Mukamolova G.V."/>
            <person name="Oren A."/>
            <person name="Rokem J.S."/>
            <person name="Smith M.C."/>
            <person name="Young D.I."/>
            <person name="Greenblatt C.L."/>
        </authorList>
    </citation>
    <scope>NUCLEOTIDE SEQUENCE [LARGE SCALE GENOMIC DNA]</scope>
    <source>
        <strain>ATCC 4698 / DSM 20030 / JCM 1464 / CCM 169 / CCUG 5858 / IAM 1056 / NBRC 3333 / NCIMB 9278 / NCTC 2665 / VKM Ac-2230</strain>
    </source>
</reference>
<dbReference type="EMBL" id="CP001628">
    <property type="protein sequence ID" value="ACS30859.1"/>
    <property type="molecule type" value="Genomic_DNA"/>
</dbReference>
<dbReference type="RefSeq" id="WP_010078508.1">
    <property type="nucleotide sequence ID" value="NC_012803.1"/>
</dbReference>
<dbReference type="SMR" id="C5CA24"/>
<dbReference type="STRING" id="465515.Mlut_13540"/>
<dbReference type="EnsemblBacteria" id="ACS30859">
    <property type="protein sequence ID" value="ACS30859"/>
    <property type="gene ID" value="Mlut_13540"/>
</dbReference>
<dbReference type="GeneID" id="93343236"/>
<dbReference type="KEGG" id="mlu:Mlut_13540"/>
<dbReference type="PATRIC" id="fig|465515.4.peg.1296"/>
<dbReference type="eggNOG" id="COG1799">
    <property type="taxonomic scope" value="Bacteria"/>
</dbReference>
<dbReference type="HOGENOM" id="CLU_078499_0_0_11"/>
<dbReference type="Proteomes" id="UP000000738">
    <property type="component" value="Chromosome"/>
</dbReference>
<dbReference type="GO" id="GO:0005737">
    <property type="term" value="C:cytoplasm"/>
    <property type="evidence" value="ECO:0007669"/>
    <property type="project" value="UniProtKB-SubCell"/>
</dbReference>
<dbReference type="GO" id="GO:0000917">
    <property type="term" value="P:division septum assembly"/>
    <property type="evidence" value="ECO:0007669"/>
    <property type="project" value="UniProtKB-KW"/>
</dbReference>
<dbReference type="GO" id="GO:0043093">
    <property type="term" value="P:FtsZ-dependent cytokinesis"/>
    <property type="evidence" value="ECO:0007669"/>
    <property type="project" value="UniProtKB-UniRule"/>
</dbReference>
<dbReference type="Gene3D" id="3.30.110.150">
    <property type="entry name" value="SepF-like protein"/>
    <property type="match status" value="1"/>
</dbReference>
<dbReference type="HAMAP" id="MF_01197">
    <property type="entry name" value="SepF"/>
    <property type="match status" value="1"/>
</dbReference>
<dbReference type="InterPro" id="IPR023052">
    <property type="entry name" value="Cell_div_SepF"/>
</dbReference>
<dbReference type="InterPro" id="IPR007561">
    <property type="entry name" value="Cell_div_SepF/SepF-rel"/>
</dbReference>
<dbReference type="InterPro" id="IPR038594">
    <property type="entry name" value="SepF-like_sf"/>
</dbReference>
<dbReference type="PANTHER" id="PTHR35798">
    <property type="entry name" value="CELL DIVISION PROTEIN SEPF"/>
    <property type="match status" value="1"/>
</dbReference>
<dbReference type="PANTHER" id="PTHR35798:SF1">
    <property type="entry name" value="CELL DIVISION PROTEIN SEPF"/>
    <property type="match status" value="1"/>
</dbReference>
<dbReference type="Pfam" id="PF04472">
    <property type="entry name" value="SepF"/>
    <property type="match status" value="1"/>
</dbReference>
<sequence length="210" mass="22267">MAGALKKTMIYLGLADGDEYDEQPRAAEREAAPRHEVVEARRPAEPDTDPHMEAVRPAAVRDPEPAERPEPVTPSGSTAAEPVEPRRPARPEPVDPGYRAPVTPIKRAAASSAEGASVHTLSTVHPRSYNDAKAIGESFRSGVPVIMNVTDLGENEAKRLVDFAAGLVFGLHGSISRITSKVFLLTPATVDVVGAEQGESSVADSPFDGD</sequence>
<accession>C5CA24</accession>
<evidence type="ECO:0000255" key="1">
    <source>
        <dbReference type="HAMAP-Rule" id="MF_01197"/>
    </source>
</evidence>
<evidence type="ECO:0000256" key="2">
    <source>
        <dbReference type="SAM" id="MobiDB-lite"/>
    </source>
</evidence>
<proteinExistence type="inferred from homology"/>
<organism>
    <name type="scientific">Micrococcus luteus (strain ATCC 4698 / DSM 20030 / JCM 1464 / CCM 169 / CCUG 5858 / IAM 1056 / NBRC 3333 / NCIMB 9278 / NCTC 2665 / VKM Ac-2230)</name>
    <name type="common">Micrococcus lysodeikticus</name>
    <dbReference type="NCBI Taxonomy" id="465515"/>
    <lineage>
        <taxon>Bacteria</taxon>
        <taxon>Bacillati</taxon>
        <taxon>Actinomycetota</taxon>
        <taxon>Actinomycetes</taxon>
        <taxon>Micrococcales</taxon>
        <taxon>Micrococcaceae</taxon>
        <taxon>Micrococcus</taxon>
    </lineage>
</organism>
<protein>
    <recommendedName>
        <fullName evidence="1">Cell division protein SepF</fullName>
    </recommendedName>
</protein>
<gene>
    <name evidence="1" type="primary">sepF</name>
    <name type="ordered locus">Mlut_13540</name>
</gene>
<keyword id="KW-0131">Cell cycle</keyword>
<keyword id="KW-0132">Cell division</keyword>
<keyword id="KW-0963">Cytoplasm</keyword>
<keyword id="KW-1185">Reference proteome</keyword>
<keyword id="KW-0717">Septation</keyword>
<comment type="function">
    <text evidence="1">Cell division protein that is part of the divisome complex and is recruited early to the Z-ring. Probably stimulates Z-ring formation, perhaps through the cross-linking of FtsZ protofilaments. Its function overlaps with FtsA.</text>
</comment>
<comment type="subunit">
    <text evidence="1">Homodimer. Interacts with FtsZ.</text>
</comment>
<comment type="subcellular location">
    <subcellularLocation>
        <location evidence="1">Cytoplasm</location>
    </subcellularLocation>
    <text evidence="1">Localizes to the division site, in a FtsZ-dependent manner.</text>
</comment>
<comment type="similarity">
    <text evidence="1">Belongs to the SepF family.</text>
</comment>
<name>SEPF_MICLC</name>